<feature type="chain" id="PRO_0000113522" description="Serine hydroxymethyltransferase">
    <location>
        <begin position="1"/>
        <end position="428"/>
    </location>
</feature>
<feature type="binding site" evidence="1">
    <location>
        <position position="117"/>
    </location>
    <ligand>
        <name>(6S)-5,6,7,8-tetrahydrofolate</name>
        <dbReference type="ChEBI" id="CHEBI:57453"/>
    </ligand>
</feature>
<feature type="binding site" evidence="1">
    <location>
        <begin position="121"/>
        <end position="123"/>
    </location>
    <ligand>
        <name>(6S)-5,6,7,8-tetrahydrofolate</name>
        <dbReference type="ChEBI" id="CHEBI:57453"/>
    </ligand>
</feature>
<feature type="site" description="Plays an important role in substrate specificity" evidence="1">
    <location>
        <position position="225"/>
    </location>
</feature>
<feature type="modified residue" description="N6-(pyridoxal phosphate)lysine" evidence="1">
    <location>
        <position position="226"/>
    </location>
</feature>
<sequence length="428" mass="47454">MEHLLKTDPEVFDAVVKEYERQFYNLEMIASENFTSLAVMEATGSVLTNKYAEGLPGKRYYGGCEYVDVVENLAIERAKKLFGAEHANVQPHSGSQANMAVYFAVLNPGDTIMGMDLAHGGHLTHGAKVNFSGKLYNVIHYGVNPETELIDYDQLYKLAKEHKPKLIVGGASAYPRVFDWAKMREIADEVGALFMVDMAHYAGLIAGGVYPNPVPYAQFVTSTTHKTLRGPRSGFILTTKEYAKAVDKSVFPGIQGGPLMHVIAAKAVAFKEAMSEEFKEYAKQVVENARVLAEELKKYGFKIVTGGTDSHIVLVDLRNKNIIGKDAEKALEKAGITVNKNAVPFDPLPPTKTSGIRIGTAALTTRGMKEDEMRKIAGWINEVLSNMDDEKTIQRVRQEVRELCETFPLYPELKRRIDELRSGKATDL</sequence>
<protein>
    <recommendedName>
        <fullName evidence="1">Serine hydroxymethyltransferase</fullName>
        <shortName evidence="1">SHMT</shortName>
        <shortName evidence="1">Serine methylase</shortName>
        <ecNumber evidence="1">2.1.2.1</ecNumber>
    </recommendedName>
</protein>
<evidence type="ECO:0000255" key="1">
    <source>
        <dbReference type="HAMAP-Rule" id="MF_00051"/>
    </source>
</evidence>
<keyword id="KW-0028">Amino-acid biosynthesis</keyword>
<keyword id="KW-0963">Cytoplasm</keyword>
<keyword id="KW-0554">One-carbon metabolism</keyword>
<keyword id="KW-0663">Pyridoxal phosphate</keyword>
<keyword id="KW-1185">Reference proteome</keyword>
<keyword id="KW-0808">Transferase</keyword>
<gene>
    <name evidence="1" type="primary">glyA</name>
    <name type="ordered locus">aq_479</name>
</gene>
<name>GLYA_AQUAE</name>
<dbReference type="EC" id="2.1.2.1" evidence="1"/>
<dbReference type="EMBL" id="AE000657">
    <property type="protein sequence ID" value="AAC06734.1"/>
    <property type="molecule type" value="Genomic_DNA"/>
</dbReference>
<dbReference type="PIR" id="D70343">
    <property type="entry name" value="D70343"/>
</dbReference>
<dbReference type="RefSeq" id="NP_213336.1">
    <property type="nucleotide sequence ID" value="NC_000918.1"/>
</dbReference>
<dbReference type="RefSeq" id="WP_010880274.1">
    <property type="nucleotide sequence ID" value="NC_000918.1"/>
</dbReference>
<dbReference type="SMR" id="O66776"/>
<dbReference type="FunCoup" id="O66776">
    <property type="interactions" value="459"/>
</dbReference>
<dbReference type="STRING" id="224324.aq_479"/>
<dbReference type="EnsemblBacteria" id="AAC06734">
    <property type="protein sequence ID" value="AAC06734"/>
    <property type="gene ID" value="aq_479"/>
</dbReference>
<dbReference type="KEGG" id="aae:aq_479"/>
<dbReference type="PATRIC" id="fig|224324.8.peg.395"/>
<dbReference type="eggNOG" id="COG0112">
    <property type="taxonomic scope" value="Bacteria"/>
</dbReference>
<dbReference type="HOGENOM" id="CLU_022477_2_1_0"/>
<dbReference type="InParanoid" id="O66776"/>
<dbReference type="OrthoDB" id="9803846at2"/>
<dbReference type="UniPathway" id="UPA00193"/>
<dbReference type="UniPathway" id="UPA00288">
    <property type="reaction ID" value="UER01023"/>
</dbReference>
<dbReference type="Proteomes" id="UP000000798">
    <property type="component" value="Chromosome"/>
</dbReference>
<dbReference type="GO" id="GO:0005737">
    <property type="term" value="C:cytoplasm"/>
    <property type="evidence" value="ECO:0000318"/>
    <property type="project" value="GO_Central"/>
</dbReference>
<dbReference type="GO" id="GO:0005829">
    <property type="term" value="C:cytosol"/>
    <property type="evidence" value="ECO:0000318"/>
    <property type="project" value="GO_Central"/>
</dbReference>
<dbReference type="GO" id="GO:0004372">
    <property type="term" value="F:glycine hydroxymethyltransferase activity"/>
    <property type="evidence" value="ECO:0000318"/>
    <property type="project" value="GO_Central"/>
</dbReference>
<dbReference type="GO" id="GO:0030170">
    <property type="term" value="F:pyridoxal phosphate binding"/>
    <property type="evidence" value="ECO:0000318"/>
    <property type="project" value="GO_Central"/>
</dbReference>
<dbReference type="GO" id="GO:0019264">
    <property type="term" value="P:glycine biosynthetic process from serine"/>
    <property type="evidence" value="ECO:0000318"/>
    <property type="project" value="GO_Central"/>
</dbReference>
<dbReference type="GO" id="GO:0035999">
    <property type="term" value="P:tetrahydrofolate interconversion"/>
    <property type="evidence" value="ECO:0007669"/>
    <property type="project" value="UniProtKB-UniRule"/>
</dbReference>
<dbReference type="GO" id="GO:0046653">
    <property type="term" value="P:tetrahydrofolate metabolic process"/>
    <property type="evidence" value="ECO:0000318"/>
    <property type="project" value="GO_Central"/>
</dbReference>
<dbReference type="CDD" id="cd00378">
    <property type="entry name" value="SHMT"/>
    <property type="match status" value="1"/>
</dbReference>
<dbReference type="FunFam" id="3.40.640.10:FF:000001">
    <property type="entry name" value="Serine hydroxymethyltransferase"/>
    <property type="match status" value="1"/>
</dbReference>
<dbReference type="FunFam" id="3.90.1150.10:FF:000003">
    <property type="entry name" value="Serine hydroxymethyltransferase"/>
    <property type="match status" value="1"/>
</dbReference>
<dbReference type="Gene3D" id="3.90.1150.10">
    <property type="entry name" value="Aspartate Aminotransferase, domain 1"/>
    <property type="match status" value="1"/>
</dbReference>
<dbReference type="Gene3D" id="3.40.640.10">
    <property type="entry name" value="Type I PLP-dependent aspartate aminotransferase-like (Major domain)"/>
    <property type="match status" value="1"/>
</dbReference>
<dbReference type="HAMAP" id="MF_00051">
    <property type="entry name" value="SHMT"/>
    <property type="match status" value="1"/>
</dbReference>
<dbReference type="InterPro" id="IPR015424">
    <property type="entry name" value="PyrdxlP-dep_Trfase"/>
</dbReference>
<dbReference type="InterPro" id="IPR015421">
    <property type="entry name" value="PyrdxlP-dep_Trfase_major"/>
</dbReference>
<dbReference type="InterPro" id="IPR015422">
    <property type="entry name" value="PyrdxlP-dep_Trfase_small"/>
</dbReference>
<dbReference type="InterPro" id="IPR001085">
    <property type="entry name" value="Ser_HO-MeTrfase"/>
</dbReference>
<dbReference type="InterPro" id="IPR049943">
    <property type="entry name" value="Ser_HO-MeTrfase-like"/>
</dbReference>
<dbReference type="InterPro" id="IPR019798">
    <property type="entry name" value="Ser_HO-MeTrfase_PLP_BS"/>
</dbReference>
<dbReference type="InterPro" id="IPR039429">
    <property type="entry name" value="SHMT-like_dom"/>
</dbReference>
<dbReference type="NCBIfam" id="NF000586">
    <property type="entry name" value="PRK00011.1"/>
    <property type="match status" value="1"/>
</dbReference>
<dbReference type="PANTHER" id="PTHR11680">
    <property type="entry name" value="SERINE HYDROXYMETHYLTRANSFERASE"/>
    <property type="match status" value="1"/>
</dbReference>
<dbReference type="PANTHER" id="PTHR11680:SF35">
    <property type="entry name" value="SERINE HYDROXYMETHYLTRANSFERASE 1"/>
    <property type="match status" value="1"/>
</dbReference>
<dbReference type="Pfam" id="PF00464">
    <property type="entry name" value="SHMT"/>
    <property type="match status" value="1"/>
</dbReference>
<dbReference type="PIRSF" id="PIRSF000412">
    <property type="entry name" value="SHMT"/>
    <property type="match status" value="1"/>
</dbReference>
<dbReference type="SUPFAM" id="SSF53383">
    <property type="entry name" value="PLP-dependent transferases"/>
    <property type="match status" value="1"/>
</dbReference>
<dbReference type="PROSITE" id="PS00096">
    <property type="entry name" value="SHMT"/>
    <property type="match status" value="1"/>
</dbReference>
<comment type="function">
    <text evidence="1">Catalyzes the reversible interconversion of serine and glycine with tetrahydrofolate (THF) serving as the one-carbon carrier. This reaction serves as the major source of one-carbon groups required for the biosynthesis of purines, thymidylate, methionine, and other important biomolecules. Also exhibits THF-independent aldolase activity toward beta-hydroxyamino acids, producing glycine and aldehydes, via a retro-aldol mechanism.</text>
</comment>
<comment type="catalytic activity">
    <reaction evidence="1">
        <text>(6R)-5,10-methylene-5,6,7,8-tetrahydrofolate + glycine + H2O = (6S)-5,6,7,8-tetrahydrofolate + L-serine</text>
        <dbReference type="Rhea" id="RHEA:15481"/>
        <dbReference type="ChEBI" id="CHEBI:15377"/>
        <dbReference type="ChEBI" id="CHEBI:15636"/>
        <dbReference type="ChEBI" id="CHEBI:33384"/>
        <dbReference type="ChEBI" id="CHEBI:57305"/>
        <dbReference type="ChEBI" id="CHEBI:57453"/>
        <dbReference type="EC" id="2.1.2.1"/>
    </reaction>
</comment>
<comment type="cofactor">
    <cofactor evidence="1">
        <name>pyridoxal 5'-phosphate</name>
        <dbReference type="ChEBI" id="CHEBI:597326"/>
    </cofactor>
</comment>
<comment type="pathway">
    <text evidence="1">One-carbon metabolism; tetrahydrofolate interconversion.</text>
</comment>
<comment type="pathway">
    <text evidence="1">Amino-acid biosynthesis; glycine biosynthesis; glycine from L-serine: step 1/1.</text>
</comment>
<comment type="subunit">
    <text evidence="1">Homodimer.</text>
</comment>
<comment type="subcellular location">
    <subcellularLocation>
        <location evidence="1">Cytoplasm</location>
    </subcellularLocation>
</comment>
<comment type="similarity">
    <text evidence="1">Belongs to the SHMT family.</text>
</comment>
<proteinExistence type="inferred from homology"/>
<accession>O66776</accession>
<organism>
    <name type="scientific">Aquifex aeolicus (strain VF5)</name>
    <dbReference type="NCBI Taxonomy" id="224324"/>
    <lineage>
        <taxon>Bacteria</taxon>
        <taxon>Pseudomonadati</taxon>
        <taxon>Aquificota</taxon>
        <taxon>Aquificia</taxon>
        <taxon>Aquificales</taxon>
        <taxon>Aquificaceae</taxon>
        <taxon>Aquifex</taxon>
    </lineage>
</organism>
<reference key="1">
    <citation type="journal article" date="1998" name="Nature">
        <title>The complete genome of the hyperthermophilic bacterium Aquifex aeolicus.</title>
        <authorList>
            <person name="Deckert G."/>
            <person name="Warren P.V."/>
            <person name="Gaasterland T."/>
            <person name="Young W.G."/>
            <person name="Lenox A.L."/>
            <person name="Graham D.E."/>
            <person name="Overbeek R."/>
            <person name="Snead M.A."/>
            <person name="Keller M."/>
            <person name="Aujay M."/>
            <person name="Huber R."/>
            <person name="Feldman R.A."/>
            <person name="Short J.M."/>
            <person name="Olsen G.J."/>
            <person name="Swanson R.V."/>
        </authorList>
    </citation>
    <scope>NUCLEOTIDE SEQUENCE [LARGE SCALE GENOMIC DNA]</scope>
    <source>
        <strain>VF5</strain>
    </source>
</reference>